<reference key="1">
    <citation type="journal article" date="2003" name="J. Biol. Chem.">
        <title>Differential roles of two N-acetylgalactosaminyltransferases, CSGalNAcT-1, and a novel enzyme, CSGalNAcT-2. Initiation and elongation in synthesis of chondroitin sulfate.</title>
        <authorList>
            <person name="Sato T."/>
            <person name="Gotoh M."/>
            <person name="Kiyohara K."/>
            <person name="Akashima T."/>
            <person name="Iwasaki H."/>
            <person name="Kameyama A."/>
            <person name="Mochizuki H."/>
            <person name="Yada T."/>
            <person name="Inaba N."/>
            <person name="Togayachi A."/>
            <person name="Kudo T."/>
            <person name="Asada M."/>
            <person name="Watanabe H."/>
            <person name="Imamura T."/>
            <person name="Kimata K."/>
            <person name="Narimatsu H."/>
        </authorList>
    </citation>
    <scope>NUCLEOTIDE SEQUENCE [MRNA] (ISOFORM 1)</scope>
    <scope>FUNCTION</scope>
    <scope>TISSUE SPECIFICITY</scope>
</reference>
<reference key="2">
    <citation type="journal article" date="2003" name="J. Biol. Chem.">
        <title>Molecular cloning and expression of a second chondroitin N-acetylgalactosaminyltransferase involved in the initiation and elongation of chondroitin/dermatan sulfate.</title>
        <authorList>
            <person name="Uyama T."/>
            <person name="Kitagawa H."/>
            <person name="Tanaka J."/>
            <person name="Tamura J."/>
            <person name="Ogawa T."/>
            <person name="Sugahara K."/>
        </authorList>
    </citation>
    <scope>NUCLEOTIDE SEQUENCE [MRNA] (ISOFORM 1)</scope>
    <scope>FUNCTION</scope>
    <scope>TISSUE SPECIFICITY</scope>
</reference>
<reference key="3">
    <citation type="journal article" date="2004" name="Nat. Genet.">
        <title>Complete sequencing and characterization of 21,243 full-length human cDNAs.</title>
        <authorList>
            <person name="Ota T."/>
            <person name="Suzuki Y."/>
            <person name="Nishikawa T."/>
            <person name="Otsuki T."/>
            <person name="Sugiyama T."/>
            <person name="Irie R."/>
            <person name="Wakamatsu A."/>
            <person name="Hayashi K."/>
            <person name="Sato H."/>
            <person name="Nagai K."/>
            <person name="Kimura K."/>
            <person name="Makita H."/>
            <person name="Sekine M."/>
            <person name="Obayashi M."/>
            <person name="Nishi T."/>
            <person name="Shibahara T."/>
            <person name="Tanaka T."/>
            <person name="Ishii S."/>
            <person name="Yamamoto J."/>
            <person name="Saito K."/>
            <person name="Kawai Y."/>
            <person name="Isono Y."/>
            <person name="Nakamura Y."/>
            <person name="Nagahari K."/>
            <person name="Murakami K."/>
            <person name="Yasuda T."/>
            <person name="Iwayanagi T."/>
            <person name="Wagatsuma M."/>
            <person name="Shiratori A."/>
            <person name="Sudo H."/>
            <person name="Hosoiri T."/>
            <person name="Kaku Y."/>
            <person name="Kodaira H."/>
            <person name="Kondo H."/>
            <person name="Sugawara M."/>
            <person name="Takahashi M."/>
            <person name="Kanda K."/>
            <person name="Yokoi T."/>
            <person name="Furuya T."/>
            <person name="Kikkawa E."/>
            <person name="Omura Y."/>
            <person name="Abe K."/>
            <person name="Kamihara K."/>
            <person name="Katsuta N."/>
            <person name="Sato K."/>
            <person name="Tanikawa M."/>
            <person name="Yamazaki M."/>
            <person name="Ninomiya K."/>
            <person name="Ishibashi T."/>
            <person name="Yamashita H."/>
            <person name="Murakawa K."/>
            <person name="Fujimori K."/>
            <person name="Tanai H."/>
            <person name="Kimata M."/>
            <person name="Watanabe M."/>
            <person name="Hiraoka S."/>
            <person name="Chiba Y."/>
            <person name="Ishida S."/>
            <person name="Ono Y."/>
            <person name="Takiguchi S."/>
            <person name="Watanabe S."/>
            <person name="Yosida M."/>
            <person name="Hotuta T."/>
            <person name="Kusano J."/>
            <person name="Kanehori K."/>
            <person name="Takahashi-Fujii A."/>
            <person name="Hara H."/>
            <person name="Tanase T.-O."/>
            <person name="Nomura Y."/>
            <person name="Togiya S."/>
            <person name="Komai F."/>
            <person name="Hara R."/>
            <person name="Takeuchi K."/>
            <person name="Arita M."/>
            <person name="Imose N."/>
            <person name="Musashino K."/>
            <person name="Yuuki H."/>
            <person name="Oshima A."/>
            <person name="Sasaki N."/>
            <person name="Aotsuka S."/>
            <person name="Yoshikawa Y."/>
            <person name="Matsunawa H."/>
            <person name="Ichihara T."/>
            <person name="Shiohata N."/>
            <person name="Sano S."/>
            <person name="Moriya S."/>
            <person name="Momiyama H."/>
            <person name="Satoh N."/>
            <person name="Takami S."/>
            <person name="Terashima Y."/>
            <person name="Suzuki O."/>
            <person name="Nakagawa S."/>
            <person name="Senoh A."/>
            <person name="Mizoguchi H."/>
            <person name="Goto Y."/>
            <person name="Shimizu F."/>
            <person name="Wakebe H."/>
            <person name="Hishigaki H."/>
            <person name="Watanabe T."/>
            <person name="Sugiyama A."/>
            <person name="Takemoto M."/>
            <person name="Kawakami B."/>
            <person name="Yamazaki M."/>
            <person name="Watanabe K."/>
            <person name="Kumagai A."/>
            <person name="Itakura S."/>
            <person name="Fukuzumi Y."/>
            <person name="Fujimori Y."/>
            <person name="Komiyama M."/>
            <person name="Tashiro H."/>
            <person name="Tanigami A."/>
            <person name="Fujiwara T."/>
            <person name="Ono T."/>
            <person name="Yamada K."/>
            <person name="Fujii Y."/>
            <person name="Ozaki K."/>
            <person name="Hirao M."/>
            <person name="Ohmori Y."/>
            <person name="Kawabata A."/>
            <person name="Hikiji T."/>
            <person name="Kobatake N."/>
            <person name="Inagaki H."/>
            <person name="Ikema Y."/>
            <person name="Okamoto S."/>
            <person name="Okitani R."/>
            <person name="Kawakami T."/>
            <person name="Noguchi S."/>
            <person name="Itoh T."/>
            <person name="Shigeta K."/>
            <person name="Senba T."/>
            <person name="Matsumura K."/>
            <person name="Nakajima Y."/>
            <person name="Mizuno T."/>
            <person name="Morinaga M."/>
            <person name="Sasaki M."/>
            <person name="Togashi T."/>
            <person name="Oyama M."/>
            <person name="Hata H."/>
            <person name="Watanabe M."/>
            <person name="Komatsu T."/>
            <person name="Mizushima-Sugano J."/>
            <person name="Satoh T."/>
            <person name="Shirai Y."/>
            <person name="Takahashi Y."/>
            <person name="Nakagawa K."/>
            <person name="Okumura K."/>
            <person name="Nagase T."/>
            <person name="Nomura N."/>
            <person name="Kikuchi H."/>
            <person name="Masuho Y."/>
            <person name="Yamashita R."/>
            <person name="Nakai K."/>
            <person name="Yada T."/>
            <person name="Nakamura Y."/>
            <person name="Ohara O."/>
            <person name="Isogai T."/>
            <person name="Sugano S."/>
        </authorList>
    </citation>
    <scope>NUCLEOTIDE SEQUENCE [LARGE SCALE MRNA] (ISOFORM 1)</scope>
    <source>
        <tissue>Lung</tissue>
    </source>
</reference>
<reference key="4">
    <citation type="journal article" date="2007" name="BMC Genomics">
        <title>The full-ORF clone resource of the German cDNA consortium.</title>
        <authorList>
            <person name="Bechtel S."/>
            <person name="Rosenfelder H."/>
            <person name="Duda A."/>
            <person name="Schmidt C.P."/>
            <person name="Ernst U."/>
            <person name="Wellenreuther R."/>
            <person name="Mehrle A."/>
            <person name="Schuster C."/>
            <person name="Bahr A."/>
            <person name="Bloecker H."/>
            <person name="Heubner D."/>
            <person name="Hoerlein A."/>
            <person name="Michel G."/>
            <person name="Wedler H."/>
            <person name="Koehrer K."/>
            <person name="Ottenwaelder B."/>
            <person name="Poustka A."/>
            <person name="Wiemann S."/>
            <person name="Schupp I."/>
        </authorList>
    </citation>
    <scope>NUCLEOTIDE SEQUENCE [LARGE SCALE MRNA] (ISOFORMS 1 AND 2)</scope>
    <scope>VARIANT SER-479</scope>
    <source>
        <tissue>Endothelial cell</tissue>
        <tissue>Small intestine</tissue>
    </source>
</reference>
<reference key="5">
    <citation type="submission" date="2005-07" db="EMBL/GenBank/DDBJ databases">
        <authorList>
            <person name="Mural R.J."/>
            <person name="Istrail S."/>
            <person name="Sutton G.G."/>
            <person name="Florea L."/>
            <person name="Halpern A.L."/>
            <person name="Mobarry C.M."/>
            <person name="Lippert R."/>
            <person name="Walenz B."/>
            <person name="Shatkay H."/>
            <person name="Dew I."/>
            <person name="Miller J.R."/>
            <person name="Flanigan M.J."/>
            <person name="Edwards N.J."/>
            <person name="Bolanos R."/>
            <person name="Fasulo D."/>
            <person name="Halldorsson B.V."/>
            <person name="Hannenhalli S."/>
            <person name="Turner R."/>
            <person name="Yooseph S."/>
            <person name="Lu F."/>
            <person name="Nusskern D.R."/>
            <person name="Shue B.C."/>
            <person name="Zheng X.H."/>
            <person name="Zhong F."/>
            <person name="Delcher A.L."/>
            <person name="Huson D.H."/>
            <person name="Kravitz S.A."/>
            <person name="Mouchard L."/>
            <person name="Reinert K."/>
            <person name="Remington K.A."/>
            <person name="Clark A.G."/>
            <person name="Waterman M.S."/>
            <person name="Eichler E.E."/>
            <person name="Adams M.D."/>
            <person name="Hunkapiller M.W."/>
            <person name="Myers E.W."/>
            <person name="Venter J.C."/>
        </authorList>
    </citation>
    <scope>NUCLEOTIDE SEQUENCE [LARGE SCALE GENOMIC DNA]</scope>
</reference>
<reference key="6">
    <citation type="journal article" date="2004" name="Genome Res.">
        <title>The status, quality, and expansion of the NIH full-length cDNA project: the Mammalian Gene Collection (MGC).</title>
        <authorList>
            <consortium name="The MGC Project Team"/>
        </authorList>
    </citation>
    <scope>NUCLEOTIDE SEQUENCE [LARGE SCALE MRNA] (ISOFORM 1)</scope>
    <source>
        <tissue>Pancreas</tissue>
    </source>
</reference>
<reference key="7">
    <citation type="journal article" date="2001" name="Genome Res.">
        <title>Gene expression profiling in human fetal liver and identification of tissue- and developmental-stage-specific genes through compiled expression profiles and efficient cloning of full-length cDNAs.</title>
        <authorList>
            <person name="Yu Y."/>
            <person name="Zhang C."/>
            <person name="Zhou G."/>
            <person name="Wu S."/>
            <person name="Qu X."/>
            <person name="Wei H."/>
            <person name="Xing G."/>
            <person name="Dong C."/>
            <person name="Zhai Y."/>
            <person name="Wan J."/>
            <person name="Ouyang S."/>
            <person name="Li L."/>
            <person name="Zhang S."/>
            <person name="Zhou K."/>
            <person name="Zhang Y."/>
            <person name="Wu C."/>
            <person name="He F."/>
        </authorList>
    </citation>
    <scope>NUCLEOTIDE SEQUENCE [LARGE SCALE MRNA] OF 418-542 (ISOFORM 1)</scope>
    <source>
        <tissue>Fetal liver</tissue>
    </source>
</reference>
<proteinExistence type="evidence at protein level"/>
<evidence type="ECO:0000255" key="1"/>
<evidence type="ECO:0000269" key="2">
    <source>
    </source>
</evidence>
<evidence type="ECO:0000269" key="3">
    <source>
    </source>
</evidence>
<evidence type="ECO:0000269" key="4">
    <source>
    </source>
</evidence>
<evidence type="ECO:0000303" key="5">
    <source>
    </source>
</evidence>
<evidence type="ECO:0000305" key="6"/>
<gene>
    <name type="primary">CSGALNACT2</name>
    <name type="synonym">CHGN2</name>
    <name type="synonym">GALNACT2</name>
    <name type="ORF">PRO0082</name>
</gene>
<comment type="function">
    <text evidence="2 3">Transfers 1,4-N-acetylgalactosamine (GalNAc) from UDP-GalNAc to the non-reducing end of glucuronic acid (GlcUA). Required for addition of the first GalNAc to the core tetrasaccharide linker and for elongation of chondroitin chains.</text>
</comment>
<comment type="catalytic activity">
    <reaction>
        <text>3-O-(beta-D-GlcA-(1-&gt;3)-beta-D-Gal-(1-&gt;3)-beta-D-Gal-(1-&gt;4)-beta-D-Xyl)-L-seryl-[protein] + UDP-N-acetyl-alpha-D-galactosamine = 3-O-(beta-D-GalNAc-(1-&gt;4)-beta-D-GlcA-(1-&gt;3)-beta-D-Gal-(1-&gt;3)-beta-D-Gal-(1-&gt;4)-beta-D-Xyl)-L-seryl-[protein] + UDP + H(+)</text>
        <dbReference type="Rhea" id="RHEA:23464"/>
        <dbReference type="Rhea" id="RHEA-COMP:12573"/>
        <dbReference type="Rhea" id="RHEA-COMP:12575"/>
        <dbReference type="ChEBI" id="CHEBI:15378"/>
        <dbReference type="ChEBI" id="CHEBI:58223"/>
        <dbReference type="ChEBI" id="CHEBI:67138"/>
        <dbReference type="ChEBI" id="CHEBI:132093"/>
        <dbReference type="ChEBI" id="CHEBI:132105"/>
        <dbReference type="EC" id="2.4.1.174"/>
    </reaction>
</comment>
<comment type="interaction">
    <interactant intactId="EBI-10267100">
        <id>Q8N6G5</id>
    </interactant>
    <interactant intactId="EBI-11343438">
        <id>Q3SXY8</id>
        <label>ARL13B</label>
    </interactant>
    <organismsDiffer>false</organismsDiffer>
    <experiments>3</experiments>
</comment>
<comment type="interaction">
    <interactant intactId="EBI-10267100">
        <id>Q8N6G5</id>
    </interactant>
    <interactant intactId="EBI-12894731">
        <id>Q9UN42</id>
        <label>ATP1B4</label>
    </interactant>
    <organismsDiffer>false</organismsDiffer>
    <experiments>3</experiments>
</comment>
<comment type="interaction">
    <interactant intactId="EBI-10267100">
        <id>Q8N6G5</id>
    </interactant>
    <interactant intactId="EBI-7996695">
        <id>Q8WZ55</id>
        <label>BSND</label>
    </interactant>
    <organismsDiffer>false</organismsDiffer>
    <experiments>3</experiments>
</comment>
<comment type="interaction">
    <interactant intactId="EBI-10267100">
        <id>Q8N6G5</id>
    </interactant>
    <interactant intactId="EBI-751440">
        <id>P57739</id>
        <label>CLDN2</label>
    </interactant>
    <organismsDiffer>false</organismsDiffer>
    <experiments>3</experiments>
</comment>
<comment type="interaction">
    <interactant intactId="EBI-10267100">
        <id>Q8N6G5</id>
    </interactant>
    <interactant intactId="EBI-6942903">
        <id>Q96BA8</id>
        <label>CREB3L1</label>
    </interactant>
    <organismsDiffer>false</organismsDiffer>
    <experiments>3</experiments>
</comment>
<comment type="interaction">
    <interactant intactId="EBI-10267100">
        <id>Q8N6G5</id>
    </interactant>
    <interactant intactId="EBI-1046040">
        <id>P00387</id>
        <label>CYB5R3</label>
    </interactant>
    <organismsDiffer>false</organismsDiffer>
    <experiments>3</experiments>
</comment>
<comment type="interaction">
    <interactant intactId="EBI-10267100">
        <id>Q8N6G5</id>
    </interactant>
    <interactant intactId="EBI-17187481">
        <id>P12318-2</id>
        <label>FCGR2A</label>
    </interactant>
    <organismsDiffer>false</organismsDiffer>
    <experiments>3</experiments>
</comment>
<comment type="interaction">
    <interactant intactId="EBI-10267100">
        <id>Q8N6G5</id>
    </interactant>
    <interactant intactId="EBI-13345167">
        <id>Q8TDT2</id>
        <label>GPR152</label>
    </interactant>
    <organismsDiffer>false</organismsDiffer>
    <experiments>3</experiments>
</comment>
<comment type="interaction">
    <interactant intactId="EBI-10267100">
        <id>Q8N6G5</id>
    </interactant>
    <interactant intactId="EBI-1052304">
        <id>Q8NBQ5</id>
        <label>HSD17B11</label>
    </interactant>
    <organismsDiffer>false</organismsDiffer>
    <experiments>3</experiments>
</comment>
<comment type="interaction">
    <interactant intactId="EBI-10267100">
        <id>Q8N6G5</id>
    </interactant>
    <interactant intactId="EBI-373355">
        <id>Q5SR56</id>
        <label>MFSD14B</label>
    </interactant>
    <organismsDiffer>false</organismsDiffer>
    <experiments>3</experiments>
</comment>
<comment type="interaction">
    <interactant intactId="EBI-10267100">
        <id>Q8N6G5</id>
    </interactant>
    <interactant intactId="EBI-17263240">
        <id>P15941-11</id>
        <label>MUC1</label>
    </interactant>
    <organismsDiffer>false</organismsDiffer>
    <experiments>3</experiments>
</comment>
<comment type="interaction">
    <interactant intactId="EBI-10267100">
        <id>Q8N6G5</id>
    </interactant>
    <interactant intactId="EBI-10192441">
        <id>Q86VR2</id>
        <label>RETREG3</label>
    </interactant>
    <organismsDiffer>false</organismsDiffer>
    <experiments>3</experiments>
</comment>
<comment type="interaction">
    <interactant intactId="EBI-10267100">
        <id>Q8N6G5</id>
    </interactant>
    <interactant intactId="EBI-13389236">
        <id>Q7Z769</id>
        <label>SLC35E3</label>
    </interactant>
    <organismsDiffer>false</organismsDiffer>
    <experiments>3</experiments>
</comment>
<comment type="interaction">
    <interactant intactId="EBI-10267100">
        <id>Q8N6G5</id>
    </interactant>
    <interactant intactId="EBI-17280858">
        <id>Q8WWF3</id>
        <label>SSMEM1</label>
    </interactant>
    <organismsDiffer>false</organismsDiffer>
    <experiments>3</experiments>
</comment>
<comment type="interaction">
    <interactant intactId="EBI-10267100">
        <id>Q8N6G5</id>
    </interactant>
    <interactant intactId="EBI-7131783">
        <id>Q8N205</id>
        <label>SYNE4</label>
    </interactant>
    <organismsDiffer>false</organismsDiffer>
    <experiments>4</experiments>
</comment>
<comment type="interaction">
    <interactant intactId="EBI-10267100">
        <id>Q8N6G5</id>
    </interactant>
    <interactant intactId="EBI-524909">
        <id>P21579</id>
        <label>SYT1</label>
    </interactant>
    <organismsDiffer>false</organismsDiffer>
    <experiments>3</experiments>
</comment>
<comment type="interaction">
    <interactant intactId="EBI-10267100">
        <id>Q8N6G5</id>
    </interactant>
    <interactant intactId="EBI-13342951">
        <id>Q96AN5</id>
        <label>TMEM143</label>
    </interactant>
    <organismsDiffer>false</organismsDiffer>
    <experiments>3</experiments>
</comment>
<comment type="interaction">
    <interactant intactId="EBI-10267100">
        <id>Q8N6G5</id>
    </interactant>
    <interactant intactId="EBI-18178701">
        <id>Q4KMG9</id>
        <label>TMEM52B</label>
    </interactant>
    <organismsDiffer>false</organismsDiffer>
    <experiments>3</experiments>
</comment>
<comment type="interaction">
    <interactant intactId="EBI-10267100">
        <id>Q8N6G5</id>
    </interactant>
    <interactant intactId="EBI-10180829">
        <id>Q7KZS0</id>
        <label>UBE2I</label>
    </interactant>
    <organismsDiffer>false</organismsDiffer>
    <experiments>3</experiments>
</comment>
<comment type="subcellular location">
    <subcellularLocation>
        <location evidence="6">Golgi apparatus</location>
        <location evidence="6">Golgi stack membrane</location>
        <topology evidence="6">Single-pass type II membrane protein</topology>
    </subcellularLocation>
</comment>
<comment type="alternative products">
    <event type="alternative splicing"/>
    <isoform>
        <id>Q8N6G5-1</id>
        <name>1</name>
        <sequence type="displayed"/>
    </isoform>
    <isoform>
        <id>Q8N6G5-2</id>
        <name>2</name>
        <sequence type="described" ref="VSP_012729 VSP_012730"/>
    </isoform>
</comment>
<comment type="tissue specificity">
    <text evidence="2 3">Ubiquitous.</text>
</comment>
<comment type="similarity">
    <text evidence="6">Belongs to the chondroitin N-acetylgalactosaminyltransferase family.</text>
</comment>
<comment type="sequence caution" evidence="6">
    <conflict type="erroneous initiation">
        <sequence resource="EMBL-CDS" id="AAF71068"/>
    </conflict>
</comment>
<comment type="online information" name="Functional Glycomics Gateway - GTase">
    <link uri="http://www.functionalglycomics.org/glycomics/molecule/jsp/glycoEnzyme/viewGlycoEnzyme.jsp?gbpId=gt_hum_478"/>
    <text>Chondroitin beta-1,4-N-acetylgalactosaminyltransferase 2</text>
</comment>
<name>CGAT2_HUMAN</name>
<organism>
    <name type="scientific">Homo sapiens</name>
    <name type="common">Human</name>
    <dbReference type="NCBI Taxonomy" id="9606"/>
    <lineage>
        <taxon>Eukaryota</taxon>
        <taxon>Metazoa</taxon>
        <taxon>Chordata</taxon>
        <taxon>Craniata</taxon>
        <taxon>Vertebrata</taxon>
        <taxon>Euteleostomi</taxon>
        <taxon>Mammalia</taxon>
        <taxon>Eutheria</taxon>
        <taxon>Euarchontoglires</taxon>
        <taxon>Primates</taxon>
        <taxon>Haplorrhini</taxon>
        <taxon>Catarrhini</taxon>
        <taxon>Hominidae</taxon>
        <taxon>Homo</taxon>
    </lineage>
</organism>
<dbReference type="EC" id="2.4.1.174"/>
<dbReference type="EMBL" id="AB079252">
    <property type="protein sequence ID" value="BAC55935.1"/>
    <property type="molecule type" value="mRNA"/>
</dbReference>
<dbReference type="EMBL" id="AB090811">
    <property type="protein sequence ID" value="BAC55936.1"/>
    <property type="molecule type" value="mRNA"/>
</dbReference>
<dbReference type="EMBL" id="AK074474">
    <property type="protein sequence ID" value="BAB85092.1"/>
    <property type="molecule type" value="mRNA"/>
</dbReference>
<dbReference type="EMBL" id="AK125300">
    <property type="protein sequence ID" value="BAG54179.1"/>
    <property type="molecule type" value="mRNA"/>
</dbReference>
<dbReference type="EMBL" id="BX640967">
    <property type="protein sequence ID" value="CAE45982.1"/>
    <property type="molecule type" value="mRNA"/>
</dbReference>
<dbReference type="EMBL" id="BX641073">
    <property type="protein sequence ID" value="CAE46036.1"/>
    <property type="molecule type" value="mRNA"/>
</dbReference>
<dbReference type="EMBL" id="CH471160">
    <property type="protein sequence ID" value="EAW86587.1"/>
    <property type="molecule type" value="Genomic_DNA"/>
</dbReference>
<dbReference type="EMBL" id="BC030268">
    <property type="protein sequence ID" value="AAH30268.1"/>
    <property type="molecule type" value="mRNA"/>
</dbReference>
<dbReference type="EMBL" id="AF116646">
    <property type="protein sequence ID" value="AAF71068.1"/>
    <property type="status" value="ALT_INIT"/>
    <property type="molecule type" value="mRNA"/>
</dbReference>
<dbReference type="CCDS" id="CCDS7201.1">
    <molecule id="Q8N6G5-1"/>
</dbReference>
<dbReference type="RefSeq" id="NP_001306583.1">
    <property type="nucleotide sequence ID" value="NM_001319654.1"/>
</dbReference>
<dbReference type="RefSeq" id="NP_001306585.1">
    <property type="nucleotide sequence ID" value="NM_001319656.1"/>
</dbReference>
<dbReference type="RefSeq" id="NP_061060.3">
    <molecule id="Q8N6G5-1"/>
    <property type="nucleotide sequence ID" value="NM_018590.4"/>
</dbReference>
<dbReference type="RefSeq" id="XP_047281394.1">
    <molecule id="Q8N6G5-1"/>
    <property type="nucleotide sequence ID" value="XM_047425438.1"/>
</dbReference>
<dbReference type="RefSeq" id="XP_047281395.1">
    <molecule id="Q8N6G5-1"/>
    <property type="nucleotide sequence ID" value="XM_047425439.1"/>
</dbReference>
<dbReference type="SMR" id="Q8N6G5"/>
<dbReference type="BioGRID" id="120672">
    <property type="interactions" value="105"/>
</dbReference>
<dbReference type="FunCoup" id="Q8N6G5">
    <property type="interactions" value="630"/>
</dbReference>
<dbReference type="IntAct" id="Q8N6G5">
    <property type="interactions" value="104"/>
</dbReference>
<dbReference type="STRING" id="9606.ENSP00000363590"/>
<dbReference type="CAZy" id="GT7">
    <property type="family name" value="Glycosyltransferase Family 7"/>
</dbReference>
<dbReference type="GlyCosmos" id="Q8N6G5">
    <property type="glycosylation" value="2 sites, No reported glycans"/>
</dbReference>
<dbReference type="GlyGen" id="Q8N6G5">
    <property type="glycosylation" value="2 sites, 1 N-linked glycan (1 site)"/>
</dbReference>
<dbReference type="iPTMnet" id="Q8N6G5"/>
<dbReference type="PhosphoSitePlus" id="Q8N6G5"/>
<dbReference type="BioMuta" id="CSGALNACT2"/>
<dbReference type="DMDM" id="60391915"/>
<dbReference type="jPOST" id="Q8N6G5"/>
<dbReference type="MassIVE" id="Q8N6G5"/>
<dbReference type="PaxDb" id="9606-ENSP00000363590"/>
<dbReference type="PeptideAtlas" id="Q8N6G5"/>
<dbReference type="ProteomicsDB" id="72168">
    <molecule id="Q8N6G5-1"/>
</dbReference>
<dbReference type="ProteomicsDB" id="72169">
    <molecule id="Q8N6G5-2"/>
</dbReference>
<dbReference type="Pumba" id="Q8N6G5"/>
<dbReference type="Antibodypedia" id="26871">
    <property type="antibodies" value="203 antibodies from 26 providers"/>
</dbReference>
<dbReference type="DNASU" id="55454"/>
<dbReference type="Ensembl" id="ENST00000374466.4">
    <molecule id="Q8N6G5-1"/>
    <property type="protein sequence ID" value="ENSP00000363590.3"/>
    <property type="gene ID" value="ENSG00000169826.8"/>
</dbReference>
<dbReference type="GeneID" id="55454"/>
<dbReference type="KEGG" id="hsa:55454"/>
<dbReference type="MANE-Select" id="ENST00000374466.4">
    <property type="protein sequence ID" value="ENSP00000363590.3"/>
    <property type="RefSeq nucleotide sequence ID" value="NM_018590.5"/>
    <property type="RefSeq protein sequence ID" value="NP_061060.3"/>
</dbReference>
<dbReference type="UCSC" id="uc001jan.5">
    <molecule id="Q8N6G5-1"/>
    <property type="organism name" value="human"/>
</dbReference>
<dbReference type="AGR" id="HGNC:24292"/>
<dbReference type="CTD" id="55454"/>
<dbReference type="DisGeNET" id="55454"/>
<dbReference type="GeneCards" id="CSGALNACT2"/>
<dbReference type="HGNC" id="HGNC:24292">
    <property type="gene designation" value="CSGALNACT2"/>
</dbReference>
<dbReference type="HPA" id="ENSG00000169826">
    <property type="expression patterns" value="Tissue enriched (bone)"/>
</dbReference>
<dbReference type="MIM" id="616616">
    <property type="type" value="gene"/>
</dbReference>
<dbReference type="neXtProt" id="NX_Q8N6G5"/>
<dbReference type="OpenTargets" id="ENSG00000169826"/>
<dbReference type="PharmGKB" id="PA162382854"/>
<dbReference type="VEuPathDB" id="HostDB:ENSG00000169826"/>
<dbReference type="eggNOG" id="KOG3588">
    <property type="taxonomic scope" value="Eukaryota"/>
</dbReference>
<dbReference type="GeneTree" id="ENSGT01050000244968"/>
<dbReference type="HOGENOM" id="CLU_025958_0_1_1"/>
<dbReference type="InParanoid" id="Q8N6G5"/>
<dbReference type="OMA" id="GMMVFRE"/>
<dbReference type="OrthoDB" id="431432at2759"/>
<dbReference type="PAN-GO" id="Q8N6G5">
    <property type="GO annotations" value="2 GO annotations based on evolutionary models"/>
</dbReference>
<dbReference type="PhylomeDB" id="Q8N6G5"/>
<dbReference type="TreeFam" id="TF318303"/>
<dbReference type="BioCyc" id="MetaCyc:HS10013-MONOMER"/>
<dbReference type="BRENDA" id="2.4.1.174">
    <property type="organism ID" value="2681"/>
</dbReference>
<dbReference type="BRENDA" id="2.4.1.175">
    <property type="organism ID" value="2681"/>
</dbReference>
<dbReference type="PathwayCommons" id="Q8N6G5"/>
<dbReference type="Reactome" id="R-HSA-2022870">
    <property type="pathway name" value="Chondroitin sulfate biosynthesis"/>
</dbReference>
<dbReference type="SignaLink" id="Q8N6G5"/>
<dbReference type="BioGRID-ORCS" id="55454">
    <property type="hits" value="11 hits in 1156 CRISPR screens"/>
</dbReference>
<dbReference type="ChiTaRS" id="CSGALNACT2">
    <property type="organism name" value="human"/>
</dbReference>
<dbReference type="GenomeRNAi" id="55454"/>
<dbReference type="Pharos" id="Q8N6G5">
    <property type="development level" value="Tbio"/>
</dbReference>
<dbReference type="PRO" id="PR:Q8N6G5"/>
<dbReference type="Proteomes" id="UP000005640">
    <property type="component" value="Chromosome 10"/>
</dbReference>
<dbReference type="RNAct" id="Q8N6G5">
    <property type="molecule type" value="protein"/>
</dbReference>
<dbReference type="Bgee" id="ENSG00000169826">
    <property type="expression patterns" value="Expressed in secondary oocyte and 195 other cell types or tissues"/>
</dbReference>
<dbReference type="ExpressionAtlas" id="Q8N6G5">
    <property type="expression patterns" value="baseline and differential"/>
</dbReference>
<dbReference type="GO" id="GO:0032580">
    <property type="term" value="C:Golgi cisterna membrane"/>
    <property type="evidence" value="ECO:0007669"/>
    <property type="project" value="UniProtKB-SubCell"/>
</dbReference>
<dbReference type="GO" id="GO:0000139">
    <property type="term" value="C:Golgi membrane"/>
    <property type="evidence" value="ECO:0000304"/>
    <property type="project" value="Reactome"/>
</dbReference>
<dbReference type="GO" id="GO:0016020">
    <property type="term" value="C:membrane"/>
    <property type="evidence" value="ECO:0007005"/>
    <property type="project" value="UniProtKB"/>
</dbReference>
<dbReference type="GO" id="GO:0008376">
    <property type="term" value="F:acetylgalactosaminyltransferase activity"/>
    <property type="evidence" value="ECO:0000314"/>
    <property type="project" value="UniProtKB"/>
</dbReference>
<dbReference type="GO" id="GO:0047238">
    <property type="term" value="F:glucuronosyl-N-acetylgalactosaminyl-proteoglycan 4-beta-N-acetylgalactosaminyltransferase activity"/>
    <property type="evidence" value="ECO:0000318"/>
    <property type="project" value="GO_Central"/>
</dbReference>
<dbReference type="GO" id="GO:0047237">
    <property type="term" value="F:glucuronylgalactosylproteoglycan 4-beta-N-acetylgalactosaminyltransferase activity"/>
    <property type="evidence" value="ECO:0007669"/>
    <property type="project" value="UniProtKB-EC"/>
</dbReference>
<dbReference type="GO" id="GO:0046872">
    <property type="term" value="F:metal ion binding"/>
    <property type="evidence" value="ECO:0007669"/>
    <property type="project" value="UniProtKB-KW"/>
</dbReference>
<dbReference type="GO" id="GO:0050650">
    <property type="term" value="P:chondroitin sulfate proteoglycan biosynthetic process"/>
    <property type="evidence" value="ECO:0000314"/>
    <property type="project" value="UniProtKB"/>
</dbReference>
<dbReference type="GO" id="GO:0050651">
    <property type="term" value="P:dermatan sulfate proteoglycan biosynthetic process"/>
    <property type="evidence" value="ECO:0000314"/>
    <property type="project" value="UniProtKB"/>
</dbReference>
<dbReference type="GO" id="GO:0030166">
    <property type="term" value="P:proteoglycan biosynthetic process"/>
    <property type="evidence" value="ECO:0000314"/>
    <property type="project" value="UniProtKB"/>
</dbReference>
<dbReference type="FunFam" id="3.90.550.10:FF:000059">
    <property type="entry name" value="Hexosyltransferase"/>
    <property type="match status" value="1"/>
</dbReference>
<dbReference type="Gene3D" id="3.90.550.10">
    <property type="entry name" value="Spore Coat Polysaccharide Biosynthesis Protein SpsA, Chain A"/>
    <property type="match status" value="1"/>
</dbReference>
<dbReference type="InterPro" id="IPR008428">
    <property type="entry name" value="Chond_GalNAc"/>
</dbReference>
<dbReference type="InterPro" id="IPR051227">
    <property type="entry name" value="CS_glycosyltransferase"/>
</dbReference>
<dbReference type="InterPro" id="IPR029044">
    <property type="entry name" value="Nucleotide-diphossugar_trans"/>
</dbReference>
<dbReference type="PANTHER" id="PTHR12369:SF20">
    <property type="entry name" value="CHONDROITIN SULFATE N-ACETYLGALACTOSAMINYLTRANSFERASE 2"/>
    <property type="match status" value="1"/>
</dbReference>
<dbReference type="PANTHER" id="PTHR12369">
    <property type="entry name" value="CHONDROITIN SYNTHASE"/>
    <property type="match status" value="1"/>
</dbReference>
<dbReference type="Pfam" id="PF05679">
    <property type="entry name" value="CHGN"/>
    <property type="match status" value="1"/>
</dbReference>
<dbReference type="SUPFAM" id="SSF53448">
    <property type="entry name" value="Nucleotide-diphospho-sugar transferases"/>
    <property type="match status" value="1"/>
</dbReference>
<accession>Q8N6G5</accession>
<accession>B3KWL7</accession>
<accession>Q6MZJ5</accession>
<accession>Q6MZP6</accession>
<accession>Q8TCH4</accession>
<accession>Q9P1I6</accession>
<sequence>MPRRGLILHTRTHWLLLGLALLCSLVLFMYLLECAPQTDGNASLPGVVGENYGKEYYQALLQEQEEHYQTRATSLKRQIAQLKQELQEMSEKMRSLQERRNVGANGIGYQSNKEQAPSDLLEFLHSQIDKAEVSIGAKLPSEYGVIPFESFTLMKVFQLEMGLTRHPEEKPVRKDKRDELVEVIEAGLEVINNPDEDDEQEDEEGPLGEKLIFNENDFVEGYYRTERDKGTQYELFFKKADLTEYRHVTLFRPFGPLMKVKSEMIDITRSIINIIVPLAERTEAFVQFMQNFRDVCIHQDKKIHLTVVYFGKEGLSKVKSILESVTSESNFHNYTLVSLNEEFNRGRGLNVGARAWDKGEVLMFFCDVDIYFSAEFLNSCRLNAEPGKKVFYPVVFSLYNPAIVYANQEVPPPVEQQLVHKKDSGFWRDFGFGMTCQYRSDFLTIGGFDMEVKGWGGEDVHLYRKYLHGDLIVIRTPVPGLFHLWHEKRCADELTPEQYRMCIQSKAMNEASHSHLGMLVFREEIETHLHKQAYRTNSEAVG</sequence>
<keyword id="KW-0025">Alternative splicing</keyword>
<keyword id="KW-0175">Coiled coil</keyword>
<keyword id="KW-0325">Glycoprotein</keyword>
<keyword id="KW-0333">Golgi apparatus</keyword>
<keyword id="KW-0472">Membrane</keyword>
<keyword id="KW-0479">Metal-binding</keyword>
<keyword id="KW-1267">Proteomics identification</keyword>
<keyword id="KW-1185">Reference proteome</keyword>
<keyword id="KW-0735">Signal-anchor</keyword>
<keyword id="KW-0808">Transferase</keyword>
<keyword id="KW-0812">Transmembrane</keyword>
<keyword id="KW-1133">Transmembrane helix</keyword>
<protein>
    <recommendedName>
        <fullName>Chondroitin sulfate N-acetylgalactosaminyltransferase 2</fullName>
        <ecNumber>2.4.1.174</ecNumber>
    </recommendedName>
    <alternativeName>
        <fullName>Chondroitin beta-1,4-N-acetylgalactosaminyltransferase 2</fullName>
        <shortName>Beta4GalNAcT-2</shortName>
        <shortName>GalNAcT-2</shortName>
    </alternativeName>
</protein>
<feature type="chain" id="PRO_0000189566" description="Chondroitin sulfate N-acetylgalactosaminyltransferase 2">
    <location>
        <begin position="1"/>
        <end position="542"/>
    </location>
</feature>
<feature type="topological domain" description="Cytoplasmic" evidence="1">
    <location>
        <begin position="1"/>
        <end position="11"/>
    </location>
</feature>
<feature type="transmembrane region" description="Helical; Signal-anchor for type II membrane protein" evidence="1">
    <location>
        <begin position="12"/>
        <end position="32"/>
    </location>
</feature>
<feature type="topological domain" description="Lumenal" evidence="1">
    <location>
        <begin position="33"/>
        <end position="542"/>
    </location>
</feature>
<feature type="coiled-coil region" evidence="1">
    <location>
        <begin position="59"/>
        <end position="105"/>
    </location>
</feature>
<feature type="binding site" evidence="1">
    <location>
        <position position="369"/>
    </location>
    <ligand>
        <name>a divalent metal cation</name>
        <dbReference type="ChEBI" id="CHEBI:60240"/>
    </ligand>
</feature>
<feature type="binding site" evidence="1">
    <location>
        <position position="486"/>
    </location>
    <ligand>
        <name>a divalent metal cation</name>
        <dbReference type="ChEBI" id="CHEBI:60240"/>
    </ligand>
</feature>
<feature type="glycosylation site" description="N-linked (GlcNAc...) asparagine" evidence="1">
    <location>
        <position position="41"/>
    </location>
</feature>
<feature type="glycosylation site" description="N-linked (GlcNAc...) asparagine" evidence="1">
    <location>
        <position position="333"/>
    </location>
</feature>
<feature type="splice variant" id="VSP_012729" description="In isoform 2." evidence="5">
    <original>SESNFHN</original>
    <variation>RLASSTW</variation>
    <location>
        <begin position="327"/>
        <end position="333"/>
    </location>
</feature>
<feature type="splice variant" id="VSP_012730" description="In isoform 2." evidence="5">
    <location>
        <begin position="334"/>
        <end position="542"/>
    </location>
</feature>
<feature type="sequence variant" id="VAR_048715" description="In dbSNP:rs11238456.">
    <original>E</original>
    <variation>K</variation>
    <location>
        <position position="215"/>
    </location>
</feature>
<feature type="sequence variant" id="VAR_048716" description="In dbSNP:rs2435381." evidence="4">
    <original>P</original>
    <variation>S</variation>
    <location>
        <position position="479"/>
    </location>
</feature>
<feature type="sequence conflict" description="In Ref. 3; BAB85092." evidence="6" ref="3">
    <original>Y</original>
    <variation>H</variation>
    <location>
        <position position="438"/>
    </location>
</feature>